<organism>
    <name type="scientific">Macaca mulatta</name>
    <name type="common">Rhesus macaque</name>
    <dbReference type="NCBI Taxonomy" id="9544"/>
    <lineage>
        <taxon>Eukaryota</taxon>
        <taxon>Metazoa</taxon>
        <taxon>Chordata</taxon>
        <taxon>Craniata</taxon>
        <taxon>Vertebrata</taxon>
        <taxon>Euteleostomi</taxon>
        <taxon>Mammalia</taxon>
        <taxon>Eutheria</taxon>
        <taxon>Euarchontoglires</taxon>
        <taxon>Primates</taxon>
        <taxon>Haplorrhini</taxon>
        <taxon>Catarrhini</taxon>
        <taxon>Cercopithecidae</taxon>
        <taxon>Cercopithecinae</taxon>
        <taxon>Macaca</taxon>
    </lineage>
</organism>
<name>BRCA1_MACMU</name>
<feature type="chain" id="PRO_0000055831" description="Breast cancer type 1 susceptibility protein homolog">
    <location>
        <begin position="1"/>
        <end position="1863"/>
    </location>
</feature>
<feature type="domain" description="BRCT 1" evidence="4">
    <location>
        <begin position="1642"/>
        <end position="1736"/>
    </location>
</feature>
<feature type="domain" description="BRCT 2" evidence="4">
    <location>
        <begin position="1756"/>
        <end position="1855"/>
    </location>
</feature>
<feature type="zinc finger region" description="RING-type" evidence="5">
    <location>
        <begin position="24"/>
        <end position="65"/>
    </location>
</feature>
<feature type="region of interest" description="Disordered" evidence="6">
    <location>
        <begin position="231"/>
        <end position="266"/>
    </location>
</feature>
<feature type="region of interest" description="Disordered" evidence="6">
    <location>
        <begin position="305"/>
        <end position="336"/>
    </location>
</feature>
<feature type="region of interest" description="Disordered" evidence="6">
    <location>
        <begin position="653"/>
        <end position="699"/>
    </location>
</feature>
<feature type="region of interest" description="Disordered" evidence="6">
    <location>
        <begin position="886"/>
        <end position="914"/>
    </location>
</feature>
<feature type="region of interest" description="Disordered" evidence="6">
    <location>
        <begin position="1042"/>
        <end position="1062"/>
    </location>
</feature>
<feature type="region of interest" description="Disordered" evidence="6">
    <location>
        <begin position="1323"/>
        <end position="1397"/>
    </location>
</feature>
<feature type="region of interest" description="Interaction with PALB2" evidence="1">
    <location>
        <begin position="1397"/>
        <end position="1424"/>
    </location>
</feature>
<feature type="region of interest" description="Disordered" evidence="6">
    <location>
        <begin position="1442"/>
        <end position="1501"/>
    </location>
</feature>
<feature type="region of interest" description="Disordered" evidence="6">
    <location>
        <begin position="1540"/>
        <end position="1618"/>
    </location>
</feature>
<feature type="compositionally biased region" description="Basic and acidic residues" evidence="6">
    <location>
        <begin position="231"/>
        <end position="240"/>
    </location>
</feature>
<feature type="compositionally biased region" description="Basic and acidic residues" evidence="6">
    <location>
        <begin position="248"/>
        <end position="260"/>
    </location>
</feature>
<feature type="compositionally biased region" description="Polar residues" evidence="6">
    <location>
        <begin position="318"/>
        <end position="334"/>
    </location>
</feature>
<feature type="compositionally biased region" description="Basic and acidic residues" evidence="6">
    <location>
        <begin position="900"/>
        <end position="914"/>
    </location>
</feature>
<feature type="compositionally biased region" description="Polar residues" evidence="6">
    <location>
        <begin position="1042"/>
        <end position="1059"/>
    </location>
</feature>
<feature type="compositionally biased region" description="Acidic residues" evidence="6">
    <location>
        <begin position="1342"/>
        <end position="1360"/>
    </location>
</feature>
<feature type="compositionally biased region" description="Polar residues" evidence="6">
    <location>
        <begin position="1373"/>
        <end position="1397"/>
    </location>
</feature>
<feature type="compositionally biased region" description="Polar residues" evidence="6">
    <location>
        <begin position="1445"/>
        <end position="1470"/>
    </location>
</feature>
<feature type="compositionally biased region" description="Polar residues" evidence="6">
    <location>
        <begin position="1607"/>
        <end position="1618"/>
    </location>
</feature>
<feature type="modified residue" description="N-acetylmethionine" evidence="2">
    <location>
        <position position="1"/>
    </location>
</feature>
<feature type="modified residue" description="Phosphoserine" evidence="2">
    <location>
        <position position="114"/>
    </location>
</feature>
<feature type="modified residue" description="Phosphoserine" evidence="2">
    <location>
        <position position="394"/>
    </location>
</feature>
<feature type="modified residue" description="Phosphoserine" evidence="2">
    <location>
        <position position="397"/>
    </location>
</feature>
<feature type="modified residue" description="Phosphoserine" evidence="2">
    <location>
        <position position="422"/>
    </location>
</feature>
<feature type="modified residue" description="Phosphoserine" evidence="2">
    <location>
        <position position="433"/>
    </location>
</feature>
<feature type="modified residue" description="Phosphoserine" evidence="2">
    <location>
        <position position="550"/>
    </location>
</feature>
<feature type="modified residue" description="Phosphoserine" evidence="2">
    <location>
        <position position="693"/>
    </location>
</feature>
<feature type="modified residue" description="Phosphoserine" evidence="2">
    <location>
        <position position="707"/>
    </location>
</feature>
<feature type="modified residue" description="Phosphoserine" evidence="3">
    <location>
        <position position="724"/>
    </location>
</feature>
<feature type="modified residue" description="Phosphoserine" evidence="2">
    <location>
        <position position="752"/>
    </location>
</feature>
<feature type="modified residue" description="Phosphoserine" evidence="3">
    <location>
        <position position="839"/>
    </location>
</feature>
<feature type="modified residue" description="Phosphoserine; by CHEK2" evidence="2">
    <location>
        <position position="987"/>
    </location>
</feature>
<feature type="modified residue" description="Phosphoserine" evidence="2">
    <location>
        <position position="1008"/>
    </location>
</feature>
<feature type="modified residue" description="Phosphoserine" evidence="2">
    <location>
        <position position="1143"/>
    </location>
</feature>
<feature type="modified residue" description="Phosphoserine" evidence="2">
    <location>
        <position position="1189"/>
    </location>
</feature>
<feature type="modified residue" description="Phosphoserine" evidence="2">
    <location>
        <position position="1191"/>
    </location>
</feature>
<feature type="modified residue" description="Phosphoserine" evidence="2">
    <location>
        <position position="1211"/>
    </location>
</feature>
<feature type="modified residue" description="Phosphoserine" evidence="2">
    <location>
        <position position="1217"/>
    </location>
</feature>
<feature type="modified residue" description="Phosphoserine" evidence="2">
    <location>
        <position position="1218"/>
    </location>
</feature>
<feature type="modified residue" description="Phosphoserine" evidence="2">
    <location>
        <position position="1280"/>
    </location>
</feature>
<feature type="modified residue" description="Phosphoserine" evidence="2">
    <location>
        <position position="1328"/>
    </location>
</feature>
<feature type="modified residue" description="Phosphoserine" evidence="2">
    <location>
        <position position="1336"/>
    </location>
</feature>
<feature type="modified residue" description="Phosphoserine" evidence="2">
    <location>
        <position position="1342"/>
    </location>
</feature>
<feature type="modified residue" description="Phosphoserine" evidence="2">
    <location>
        <position position="1387"/>
    </location>
</feature>
<feature type="modified residue" description="Phosphothreonine" evidence="2">
    <location>
        <position position="1394"/>
    </location>
</feature>
<feature type="modified residue" description="Phosphoserine" evidence="2">
    <location>
        <position position="1423"/>
    </location>
</feature>
<feature type="modified residue" description="Phosphoserine" evidence="2">
    <location>
        <position position="1457"/>
    </location>
</feature>
<feature type="modified residue" description="Phosphoserine" evidence="2">
    <location>
        <position position="1524"/>
    </location>
</feature>
<feature type="modified residue" description="Phosphoserine" evidence="2">
    <location>
        <position position="1542"/>
    </location>
</feature>
<feature type="cross-link" description="Glycyl lysine isopeptide (Lys-Gly) (interchain with G-Cter in SUMO2)" evidence="2">
    <location>
        <position position="109"/>
    </location>
</feature>
<feature type="cross-link" description="Glycyl lysine isopeptide (Lys-Gly) (interchain with G-Cter in SUMO2)" evidence="2">
    <location>
        <position position="300"/>
    </location>
</feature>
<feature type="cross-link" description="Glycyl lysine isopeptide (Lys-Gly) (interchain with G-Cter in SUMO2)" evidence="2">
    <location>
        <position position="338"/>
    </location>
</feature>
<feature type="cross-link" description="Glycyl lysine isopeptide (Lys-Gly) (interchain with G-Cter in SUMO2)" evidence="2">
    <location>
        <position position="442"/>
    </location>
</feature>
<feature type="cross-link" description="Glycyl lysine isopeptide (Lys-Gly) (interchain with G-Cter in SUMO2)" evidence="2">
    <location>
        <position position="458"/>
    </location>
</feature>
<feature type="cross-link" description="Glycyl lysine isopeptide (Lys-Gly) (interchain with G-Cter in SUMO2)" evidence="2">
    <location>
        <position position="518"/>
    </location>
</feature>
<feature type="cross-link" description="Glycyl lysine isopeptide (Lys-Gly) (interchain with G-Cter in SUMO2)" evidence="2">
    <location>
        <position position="582"/>
    </location>
</feature>
<feature type="cross-link" description="Glycyl lysine isopeptide (Lys-Gly) (interchain with G-Cter in SUMO2)" evidence="2">
    <location>
        <position position="733"/>
    </location>
</feature>
<feature type="cross-link" description="Glycyl lysine isopeptide (Lys-Gly) (interchain with G-Cter in SUMO2)" evidence="2">
    <location>
        <position position="738"/>
    </location>
</feature>
<feature type="cross-link" description="Glycyl lysine isopeptide (Lys-Gly) (interchain with G-Cter in SUMO2)" evidence="2">
    <location>
        <position position="917"/>
    </location>
</feature>
<feature type="cross-link" description="Glycyl lysine isopeptide (Lys-Gly) (interchain with G-Cter in SUMO2)" evidence="2">
    <location>
        <position position="986"/>
    </location>
</feature>
<feature type="cross-link" description="Glycyl lysine isopeptide (Lys-Gly) (interchain with G-Cter in SUMO2)" evidence="2">
    <location>
        <position position="1079"/>
    </location>
</feature>
<feature type="sequence conflict" description="In Ref. 2; AAC39586." evidence="7" ref="2">
    <original>A</original>
    <variation>T</variation>
    <location>
        <position position="366"/>
    </location>
</feature>
<feature type="sequence conflict" description="In Ref. 2; AAC39586." evidence="7" ref="2">
    <original>A</original>
    <variation>P</variation>
    <location>
        <position position="569"/>
    </location>
</feature>
<feature type="sequence conflict" description="In Ref. 2; AAC39586." evidence="7" ref="2">
    <location>
        <position position="717"/>
    </location>
</feature>
<feature type="sequence conflict" description="In Ref. 2; AAC39586." evidence="7" ref="2">
    <original>M</original>
    <variation>I</variation>
    <location>
        <position position="750"/>
    </location>
</feature>
<feature type="sequence conflict" description="In Ref. 2; AAC39586." evidence="7" ref="2">
    <original>D</original>
    <variation>G</variation>
    <location>
        <position position="773"/>
    </location>
</feature>
<feature type="sequence conflict" description="In Ref. 2; AAC39586." evidence="7" ref="2">
    <original>E</original>
    <variation>Q</variation>
    <location>
        <position position="913"/>
    </location>
</feature>
<feature type="sequence conflict" description="In Ref. 2; AAC39586." evidence="7" ref="2">
    <original>E</original>
    <variation>K</variation>
    <location>
        <position position="1016"/>
    </location>
</feature>
<feature type="sequence conflict" description="In Ref. 2; AAC39586." evidence="7" ref="2">
    <original>P</original>
    <variation>S</variation>
    <location>
        <position position="1063"/>
    </location>
</feature>
<feature type="sequence conflict" description="In Ref. 2; AAC39586." evidence="7" ref="2">
    <original>A</original>
    <variation>E</variation>
    <location>
        <position position="1167"/>
    </location>
</feature>
<feature type="sequence conflict" description="In Ref. 2; AAC39586." evidence="7" ref="2">
    <original>Q</original>
    <variation>R</variation>
    <location>
        <position position="1203"/>
    </location>
</feature>
<reference key="1">
    <citation type="journal article" date="2004" name="Hum. Mol. Genet.">
        <title>Evolution of the tumor suppressor BRCA1 locus in primates: implications for cancer predisposition.</title>
        <authorList>
            <person name="Pavlicek A."/>
            <person name="Noskov V.N."/>
            <person name="Kouprina N."/>
            <person name="Barrett J.C."/>
            <person name="Jurka J."/>
            <person name="Larionov V."/>
        </authorList>
    </citation>
    <scope>NUCLEOTIDE SEQUENCE [GENOMIC DNA]</scope>
</reference>
<reference key="2">
    <citation type="journal article" date="1998" name="Nat. Genet.">
        <title>Evolutionary sequence comparisons using high-density oligonucleotide arrays.</title>
        <authorList>
            <person name="Hacia J.G."/>
            <person name="Makalowski W."/>
            <person name="Edgemon K."/>
            <person name="Erdos M.R."/>
            <person name="Robbins C.M."/>
            <person name="Fodor S.P.A."/>
            <person name="Brody L.C."/>
            <person name="Collins F.S."/>
        </authorList>
    </citation>
    <scope>NUCLEOTIDE SEQUENCE [GENOMIC DNA] OF 225-1365</scope>
</reference>
<reference key="3">
    <citation type="submission" date="1996-01" db="EMBL/GenBank/DDBJ databases">
        <authorList>
            <person name="Thompson M.E."/>
            <person name="Holt J.T."/>
        </authorList>
    </citation>
    <scope>NUCLEOTIDE SEQUENCE [GENOMIC DNA] OF 1189-1253</scope>
</reference>
<accession>Q6J6I9</accession>
<accession>O46487</accession>
<accession>Q28525</accession>
<protein>
    <recommendedName>
        <fullName>Breast cancer type 1 susceptibility protein homolog</fullName>
        <ecNumber evidence="2">2.3.2.27</ecNumber>
    </recommendedName>
    <alternativeName>
        <fullName evidence="7">RING-type E3 ubiquitin transferase BRCA1</fullName>
    </alternativeName>
</protein>
<proteinExistence type="inferred from homology"/>
<sequence>MDLSAVRVEEVQNVINAMQKILECPICLELIKEPVSTKCDHIFCRFCMLKLLNQKKGPSQCPLCKNDITKRSLQESTRFSQLVEELLKIIHAFQLDTGLQFANSYNFAKKENHSPEHLKDEVSIIQSMGYRNRAKRLLQSEPENPSLQETSLSVPLSNLGIVRTLRTKQQIQPQKKSVYIELGSDSSEDTVNKATYCSVGDQELLQITPQGTRDETSLDSAKKAACEFSEKDITNTEHHQSSNNDLNTTEKHATERHPEKYQGSSVSNLHVEPCGTNTHASSLQHENSLLLTKDRMNVEKAEFCNKSKQPGLARSQHNRWTGSKETCNDRQTPSTEKKVDLNANALYERKEWNKQKLPCSENPRDAEDVPWITLNSSIQKVNEWFSRSDELLSSDDSHDGGSESNAKVADVLDVLNEVDEYSGSSEKIDLLASDPHEPLICKSERVHSSSVESNIKDKIFGKTYRRKANLPNLSHVTENLIIGALVTESQIMQERPLTNKLKRKRRTTSGLHPEDFIKKADLAVQKTPEIINQGTNQMEQNGQVMNITNSAHENKTKGDSIQNEKNPNAIESLEEESAFKTKAEPISSSINNMELELNIHNSKAPKKNRLRRKSSTRHIHALELVVSRNLSPPNCTELQIDSCSSSEEIKKKNYNQMPVRHSRNLQLMEDKESATGAKKSNKPNEQTSKRHASDTFPELKLTKVPGSFTNCSNTSELKEFVNPSLSREEKEEKLETVKVSNNAKDPKDLMLSGERVLQTERSVESSSISLVPDTDYGTQESISLLEVSTLGKAKTERNKCMSQCAAFENPKELIHGCSEDTRNDTEGFKYPLGSEVNHSQETSIEIEESELDTQYLQNTFKVSKRQSFALFSNPGNPEEECATFSAHSRSLKKQSPKVTSECEQKEENQGKKESNIKPVQTVNITAGFSVVCQKDKPVDNAKCSIKGGSRFCLSSQFRGNETGLITPNKHGLLQNPYHIPPLFPVKSFVKTKCNKNLLEENSEEHSVSPERAVGNENIIPSTVSTISHNNIRENAFKEASSSNINEVGSSTNEVGSSINEVGPSDENIQAELGRNRGPKLNAVLRLGLLQPEVCKQSLPISNCKHPEIKKQEHEELVQTVNTDFSPCLISDNLEQPMGSSHASEVCSETPDDLLDDGEIKEDTSFAANDIKESSAVFSKSIQRGELSRSPSPFTHTHLAQGYQKEAKKLESSEENLSSEDEELPCFQHLLFGKVSNIPSQTTRHSTVATECLSKNTEENLLSLKNSLTDCSNQVILAKASQEHHLSEETKCSGSLFSSQCSELEDLTANTNTQDPFLIGSSKRMRHQSESQGVGLSDKELVSDDEERGTGLEEDNQEEQSVDSNLGEAASGYESETSVSEDCSRLSSQSEILTTQQRDTMQDNLIKLQQEMAELEAVLEQHGSQPSNSYPSIITDSSALEDLRNPEQSTSEKAVLTSQKSSEYPINQNPEGLSADKFEVSADSSTSKNKEPGVERSSPSKCQSLEDRWYVHSSSGSLQNGNYPSQEELIKVVDVETQQLEKSGPHDLMEPSYLPRQDLDGTPYLESGISLFSDDPESDPSEDRAPESAHVGSIPSSTSALKVPQWQVAESAQSPAAAHNTNTAGYNAMEESVSRENPKLTASTERVNKRMSLVVSGLTPEEFMLVYKFARRYHIALTNLISEETTHVVMKTDAEFVCERTLKYFLGIAGGKWVVSYFWVTQSIKERKMLNEHDFEVRGDVVNGRNHQGPKRARESPDRKIFRGLEICCYGPFTNMPTDQLEWMVQLCGASVVKELSSFTLGTGFHPIVVVQPDAWTEDNGFHAIGQMCEAPVVTREWVLDSVALYQCQELDTYLIPQIPHSHY</sequence>
<evidence type="ECO:0000250" key="1"/>
<evidence type="ECO:0000250" key="2">
    <source>
        <dbReference type="UniProtKB" id="P38398"/>
    </source>
</evidence>
<evidence type="ECO:0000250" key="3">
    <source>
        <dbReference type="UniProtKB" id="P48754"/>
    </source>
</evidence>
<evidence type="ECO:0000255" key="4">
    <source>
        <dbReference type="PROSITE-ProRule" id="PRU00033"/>
    </source>
</evidence>
<evidence type="ECO:0000255" key="5">
    <source>
        <dbReference type="PROSITE-ProRule" id="PRU00175"/>
    </source>
</evidence>
<evidence type="ECO:0000256" key="6">
    <source>
        <dbReference type="SAM" id="MobiDB-lite"/>
    </source>
</evidence>
<evidence type="ECO:0000305" key="7"/>
<comment type="function">
    <text evidence="2">E3 ubiquitin-protein ligase that specifically mediates the formation of 'Lys-6'-linked polyubiquitin chains and plays a central role in DNA repair by facilitating cellular responses to DNA damage. It is unclear whether it also mediates the formation of other types of polyubiquitin chains. The BRCA1-BARD1 heterodimer coordinates a diverse range of cellular pathways such as DNA damage repair, ubiquitination and transcriptional regulation to maintain genomic stability. Regulates centrosomal microtubule nucleation. Required for appropriate cell cycle arrests after ionizing irradiation in both the S-phase and the G2 phase of the cell cycle. Required for FANCD2 targeting to sites of DNA damage. Inhibits lipid synthesis by binding to inactive phosphorylated ACACA and preventing its dephosphorylation. Contributes to homologous recombination repair (HRR) via its direct interaction with PALB2, fine-tunes recombinational repair partly through its modulatory role in the PALB2-dependent loading of BRCA2-RAD51 repair machinery at DNA breaks. Component of the BRCA1-RBBP8 complex which regulates CHEK1 activation and controls cell cycle G2/M checkpoints on DNA damage via BRCA1-mediated ubiquitination of RBBP8. Acts as a transcriptional activator.</text>
</comment>
<comment type="catalytic activity">
    <reaction evidence="2">
        <text>S-ubiquitinyl-[E2 ubiquitin-conjugating enzyme]-L-cysteine + [acceptor protein]-L-lysine = [E2 ubiquitin-conjugating enzyme]-L-cysteine + N(6)-ubiquitinyl-[acceptor protein]-L-lysine.</text>
        <dbReference type="EC" id="2.3.2.27"/>
    </reaction>
</comment>
<comment type="pathway">
    <text>Protein modification; protein ubiquitination.</text>
</comment>
<comment type="subunit">
    <text evidence="2">Heterodimer with BARD1. Part of the BRCA1-associated genome surveillance complex (BASC), which contains BRCA1, MSH2, MSH6, MLH1, ATM, BLM, PMS2 and the MRE11-RAD50-NBN protein (MRN) complex. This association could be a dynamic process changing throughout the cell cycle and within subnuclear domains. Component of the BRCA1-A complex, at least composed of BRCA1, BARD1, UIMC1/RAP80, ABRAXAS1, BRCC3/BRCC36, BABAM2 and BABAM1/NBA1. Interacts (via the BRCT domains) with ABRAXAS1 (phosphorylated form); this is important for recruitment to sites of DNA damage. Can form a heterotetramer with two molecules of ABRAXAS1 (phosphorylated form). Component of the BRCA1-RBBP8 complex. Interacts (via the BRCT domains) with RBBP8 ('Ser-327' phosphorylated form); the interaction ubiquitinates RBBP8, regulates CHEK1 activation, and involves RBBP8 in BRCA1-dependent G2/M checkpoint control on DNA damage. Associates with RNA polymerase II holoenzyme. Interacts with SMC1A, NELFB, DCLRE1C, CLSPN. CHEK1, CHEK2, BAP1, BRCC3, UBXN1 and PCLAF. Interacts (via BRCT domains) with BRIP1 (phosphorylated form). Interacts with FANCD2 (ubiquitinated form). Interacts with H2AX (phosphorylated on 'Ser-140'). Interacts (via the BRCT domains) with ACACA (phosphorylated form); the interaction prevents dephosphorylation of ACACA. Part of a BRCA complex containing BRCA1, BRCA2 and PALB2. Interacts directly with PALB2; the interaction is essential for its function in HRR. Interacts directly with BRCA2; the interaction occurs only in the presence of PALB2 which serves as the bridging protein. Interacts (via the BRCT domains) with LMO4; the interaction represses the transcriptional activity of BRCA1. Interacts (via the BRCT domains) with CCAR2 (via N-terminus); the interaction represses the transcriptional activator activity of BRCA1 (By similarity). Interacts with EXD2 (By similarity). Interacts (via C-terminus) with DHX9; this interaction is direct and links BRCA1 to the RNA polymerase II holoenzyme (By similarity). Interacts with DNA helicase ZGRF1; the interaction is increased following DNA damage induction (By similarity).</text>
</comment>
<comment type="subcellular location">
    <subcellularLocation>
        <location evidence="2">Nucleus</location>
    </subcellularLocation>
    <subcellularLocation>
        <location evidence="3">Chromosome</location>
    </subcellularLocation>
    <subcellularLocation>
        <location evidence="2">Cytoplasm</location>
    </subcellularLocation>
    <text evidence="2">Localizes at sites of DNA damage at double-strand breaks (DSBs); recruitment to DNA damage sites is mediated by the BRCA1-A complex. Translocated to the cytoplasm during UV-induced apoptosis.</text>
</comment>
<comment type="domain">
    <text evidence="2">The BRCT domains recognize and bind phosphorylated pSXXF motif on proteins. The interaction with the phosphorylated pSXXF motif of ABRAXAS1, recruits BRCA1 at DNA damage sites.</text>
</comment>
<comment type="domain">
    <text evidence="2">The RING-type zinc finger domain interacts with BAP1.</text>
</comment>
<comment type="PTM">
    <text evidence="2">Phosphorylated in response to IR, UV, and various stimuli that cause checkpoint activation, probably by ATM or ATR. Phosphorylation at Ser-987 by CHEK2 regulates mitotic spindle assembly. Phosphorylation by AURKA regulates centrosomal microtubule nucleation.</text>
</comment>
<comment type="PTM">
    <text evidence="2">Autoubiquitinated, undergoes 'Lys-6'-linked polyubiquitination. 'Lys-6'-linked polyubiquitination does not promote degradation.</text>
</comment>
<dbReference type="EC" id="2.3.2.27" evidence="2"/>
<dbReference type="EMBL" id="AY589041">
    <property type="protein sequence ID" value="AAT44833.1"/>
    <property type="molecule type" value="Genomic_DNA"/>
</dbReference>
<dbReference type="EMBL" id="AF019078">
    <property type="protein sequence ID" value="AAC39586.1"/>
    <property type="molecule type" value="Genomic_DNA"/>
</dbReference>
<dbReference type="EMBL" id="U44730">
    <property type="protein sequence ID" value="AAB03212.1"/>
    <property type="molecule type" value="Genomic_DNA"/>
</dbReference>
<dbReference type="PIR" id="G02999">
    <property type="entry name" value="G02999"/>
</dbReference>
<dbReference type="RefSeq" id="NP_001108421.1">
    <property type="nucleotide sequence ID" value="NM_001114949.1"/>
</dbReference>
<dbReference type="BMRB" id="Q6J6I9"/>
<dbReference type="SMR" id="Q6J6I9"/>
<dbReference type="FunCoup" id="Q6J6I9">
    <property type="interactions" value="1510"/>
</dbReference>
<dbReference type="STRING" id="9544.ENSMMUP00000034386"/>
<dbReference type="PaxDb" id="9544-ENSMMUP00000034386"/>
<dbReference type="GeneID" id="712634"/>
<dbReference type="KEGG" id="mcc:712634"/>
<dbReference type="CTD" id="672"/>
<dbReference type="eggNOG" id="KOG4362">
    <property type="taxonomic scope" value="Eukaryota"/>
</dbReference>
<dbReference type="InParanoid" id="Q6J6I9"/>
<dbReference type="OrthoDB" id="6105938at2759"/>
<dbReference type="UniPathway" id="UPA00143"/>
<dbReference type="Proteomes" id="UP000006718">
    <property type="component" value="Unassembled WGS sequence"/>
</dbReference>
<dbReference type="GO" id="GO:0070531">
    <property type="term" value="C:BRCA1-A complex"/>
    <property type="evidence" value="ECO:0000318"/>
    <property type="project" value="GO_Central"/>
</dbReference>
<dbReference type="GO" id="GO:0031436">
    <property type="term" value="C:BRCA1-BARD1 complex"/>
    <property type="evidence" value="ECO:0000250"/>
    <property type="project" value="UniProtKB"/>
</dbReference>
<dbReference type="GO" id="GO:0005694">
    <property type="term" value="C:chromosome"/>
    <property type="evidence" value="ECO:0000250"/>
    <property type="project" value="UniProtKB"/>
</dbReference>
<dbReference type="GO" id="GO:0005737">
    <property type="term" value="C:cytoplasm"/>
    <property type="evidence" value="ECO:0000250"/>
    <property type="project" value="UniProtKB"/>
</dbReference>
<dbReference type="GO" id="GO:0005634">
    <property type="term" value="C:nucleus"/>
    <property type="evidence" value="ECO:0000250"/>
    <property type="project" value="UniProtKB"/>
</dbReference>
<dbReference type="GO" id="GO:0003677">
    <property type="term" value="F:DNA binding"/>
    <property type="evidence" value="ECO:0007669"/>
    <property type="project" value="UniProtKB-KW"/>
</dbReference>
<dbReference type="GO" id="GO:0070063">
    <property type="term" value="F:RNA polymerase binding"/>
    <property type="evidence" value="ECO:0000250"/>
    <property type="project" value="UniProtKB"/>
</dbReference>
<dbReference type="GO" id="GO:0003713">
    <property type="term" value="F:transcription coactivator activity"/>
    <property type="evidence" value="ECO:0000250"/>
    <property type="project" value="UniProtKB"/>
</dbReference>
<dbReference type="GO" id="GO:0004842">
    <property type="term" value="F:ubiquitin-protein transferase activity"/>
    <property type="evidence" value="ECO:0000250"/>
    <property type="project" value="UniProtKB"/>
</dbReference>
<dbReference type="GO" id="GO:0008270">
    <property type="term" value="F:zinc ion binding"/>
    <property type="evidence" value="ECO:0007669"/>
    <property type="project" value="UniProtKB-KW"/>
</dbReference>
<dbReference type="GO" id="GO:0043009">
    <property type="term" value="P:chordate embryonic development"/>
    <property type="evidence" value="ECO:0000318"/>
    <property type="project" value="GO_Central"/>
</dbReference>
<dbReference type="GO" id="GO:0000724">
    <property type="term" value="P:double-strand break repair via homologous recombination"/>
    <property type="evidence" value="ECO:0000318"/>
    <property type="project" value="GO_Central"/>
</dbReference>
<dbReference type="GO" id="GO:0006633">
    <property type="term" value="P:fatty acid biosynthetic process"/>
    <property type="evidence" value="ECO:0007669"/>
    <property type="project" value="UniProtKB-KW"/>
</dbReference>
<dbReference type="GO" id="GO:0007095">
    <property type="term" value="P:mitotic G2 DNA damage checkpoint signaling"/>
    <property type="evidence" value="ECO:0000318"/>
    <property type="project" value="GO_Central"/>
</dbReference>
<dbReference type="GO" id="GO:0045717">
    <property type="term" value="P:negative regulation of fatty acid biosynthetic process"/>
    <property type="evidence" value="ECO:0000250"/>
    <property type="project" value="UniProtKB"/>
</dbReference>
<dbReference type="GO" id="GO:0045893">
    <property type="term" value="P:positive regulation of DNA-templated transcription"/>
    <property type="evidence" value="ECO:0000250"/>
    <property type="project" value="UniProtKB"/>
</dbReference>
<dbReference type="GO" id="GO:0045944">
    <property type="term" value="P:positive regulation of transcription by RNA polymerase II"/>
    <property type="evidence" value="ECO:0000318"/>
    <property type="project" value="GO_Central"/>
</dbReference>
<dbReference type="GO" id="GO:0051865">
    <property type="term" value="P:protein autoubiquitination"/>
    <property type="evidence" value="ECO:0000250"/>
    <property type="project" value="UniProtKB"/>
</dbReference>
<dbReference type="GO" id="GO:0085020">
    <property type="term" value="P:protein K6-linked ubiquitination"/>
    <property type="evidence" value="ECO:0000250"/>
    <property type="project" value="UniProtKB"/>
</dbReference>
<dbReference type="GO" id="GO:0006357">
    <property type="term" value="P:regulation of transcription by RNA polymerase II"/>
    <property type="evidence" value="ECO:0000250"/>
    <property type="project" value="UniProtKB"/>
</dbReference>
<dbReference type="GO" id="GO:0007549">
    <property type="term" value="P:sex-chromosome dosage compensation"/>
    <property type="evidence" value="ECO:0000318"/>
    <property type="project" value="GO_Central"/>
</dbReference>
<dbReference type="CDD" id="cd17735">
    <property type="entry name" value="BRCT_BRCA1_rpt1"/>
    <property type="match status" value="1"/>
</dbReference>
<dbReference type="CDD" id="cd17721">
    <property type="entry name" value="BRCT_BRCA1_rpt2"/>
    <property type="match status" value="1"/>
</dbReference>
<dbReference type="CDD" id="cd16498">
    <property type="entry name" value="RING-HC_BRCA1"/>
    <property type="match status" value="1"/>
</dbReference>
<dbReference type="FunFam" id="3.30.40.10:FF:000213">
    <property type="entry name" value="Breast cancer type 1 susceptibility protein homolog"/>
    <property type="match status" value="1"/>
</dbReference>
<dbReference type="FunFam" id="3.40.50.10190:FF:000006">
    <property type="entry name" value="Breast cancer type 1 susceptibility protein homolog"/>
    <property type="match status" value="1"/>
</dbReference>
<dbReference type="FunFam" id="3.40.50.10190:FF:000025">
    <property type="entry name" value="Breast cancer type 1 susceptibility protein homolog"/>
    <property type="match status" value="1"/>
</dbReference>
<dbReference type="Gene3D" id="3.40.50.10190">
    <property type="entry name" value="BRCT domain"/>
    <property type="match status" value="2"/>
</dbReference>
<dbReference type="Gene3D" id="3.30.40.10">
    <property type="entry name" value="Zinc/RING finger domain, C3HC4 (zinc finger)"/>
    <property type="match status" value="1"/>
</dbReference>
<dbReference type="InterPro" id="IPR011364">
    <property type="entry name" value="BRCA1"/>
</dbReference>
<dbReference type="InterPro" id="IPR031099">
    <property type="entry name" value="BRCA1-associated"/>
</dbReference>
<dbReference type="InterPro" id="IPR025994">
    <property type="entry name" value="BRCA1_serine_dom"/>
</dbReference>
<dbReference type="InterPro" id="IPR001357">
    <property type="entry name" value="BRCT_dom"/>
</dbReference>
<dbReference type="InterPro" id="IPR036420">
    <property type="entry name" value="BRCT_dom_sf"/>
</dbReference>
<dbReference type="InterPro" id="IPR018957">
    <property type="entry name" value="Znf_C3HC4_RING-type"/>
</dbReference>
<dbReference type="InterPro" id="IPR001841">
    <property type="entry name" value="Znf_RING"/>
</dbReference>
<dbReference type="InterPro" id="IPR013083">
    <property type="entry name" value="Znf_RING/FYVE/PHD"/>
</dbReference>
<dbReference type="InterPro" id="IPR017907">
    <property type="entry name" value="Znf_RING_CS"/>
</dbReference>
<dbReference type="PANTHER" id="PTHR13763:SF0">
    <property type="entry name" value="BREAST CANCER TYPE 1 SUSCEPTIBILITY PROTEIN"/>
    <property type="match status" value="1"/>
</dbReference>
<dbReference type="PANTHER" id="PTHR13763">
    <property type="entry name" value="BREAST CANCER TYPE 1 SUSCEPTIBILITY PROTEIN BRCA1"/>
    <property type="match status" value="1"/>
</dbReference>
<dbReference type="Pfam" id="PF00533">
    <property type="entry name" value="BRCT"/>
    <property type="match status" value="2"/>
</dbReference>
<dbReference type="Pfam" id="PF12820">
    <property type="entry name" value="BRCT_assoc"/>
    <property type="match status" value="1"/>
</dbReference>
<dbReference type="Pfam" id="PF00097">
    <property type="entry name" value="zf-C3HC4"/>
    <property type="match status" value="1"/>
</dbReference>
<dbReference type="PIRSF" id="PIRSF001734">
    <property type="entry name" value="BRCA1"/>
    <property type="match status" value="1"/>
</dbReference>
<dbReference type="PRINTS" id="PR00493">
    <property type="entry name" value="BRSTCANCERI"/>
</dbReference>
<dbReference type="SMART" id="SM00292">
    <property type="entry name" value="BRCT"/>
    <property type="match status" value="2"/>
</dbReference>
<dbReference type="SMART" id="SM00184">
    <property type="entry name" value="RING"/>
    <property type="match status" value="1"/>
</dbReference>
<dbReference type="SUPFAM" id="SSF52113">
    <property type="entry name" value="BRCT domain"/>
    <property type="match status" value="2"/>
</dbReference>
<dbReference type="SUPFAM" id="SSF57850">
    <property type="entry name" value="RING/U-box"/>
    <property type="match status" value="1"/>
</dbReference>
<dbReference type="PROSITE" id="PS50172">
    <property type="entry name" value="BRCT"/>
    <property type="match status" value="2"/>
</dbReference>
<dbReference type="PROSITE" id="PS00518">
    <property type="entry name" value="ZF_RING_1"/>
    <property type="match status" value="1"/>
</dbReference>
<dbReference type="PROSITE" id="PS50089">
    <property type="entry name" value="ZF_RING_2"/>
    <property type="match status" value="1"/>
</dbReference>
<gene>
    <name type="primary">BRCA1</name>
</gene>
<keyword id="KW-0007">Acetylation</keyword>
<keyword id="KW-0010">Activator</keyword>
<keyword id="KW-0131">Cell cycle</keyword>
<keyword id="KW-0158">Chromosome</keyword>
<keyword id="KW-0963">Cytoplasm</keyword>
<keyword id="KW-0227">DNA damage</keyword>
<keyword id="KW-0233">DNA recombination</keyword>
<keyword id="KW-0234">DNA repair</keyword>
<keyword id="KW-0238">DNA-binding</keyword>
<keyword id="KW-0275">Fatty acid biosynthesis</keyword>
<keyword id="KW-0276">Fatty acid metabolism</keyword>
<keyword id="KW-1017">Isopeptide bond</keyword>
<keyword id="KW-0444">Lipid biosynthesis</keyword>
<keyword id="KW-0443">Lipid metabolism</keyword>
<keyword id="KW-0479">Metal-binding</keyword>
<keyword id="KW-0539">Nucleus</keyword>
<keyword id="KW-0597">Phosphoprotein</keyword>
<keyword id="KW-1185">Reference proteome</keyword>
<keyword id="KW-0677">Repeat</keyword>
<keyword id="KW-0804">Transcription</keyword>
<keyword id="KW-0805">Transcription regulation</keyword>
<keyword id="KW-0808">Transferase</keyword>
<keyword id="KW-0043">Tumor suppressor</keyword>
<keyword id="KW-0832">Ubl conjugation</keyword>
<keyword id="KW-0833">Ubl conjugation pathway</keyword>
<keyword id="KW-0862">Zinc</keyword>
<keyword id="KW-0863">Zinc-finger</keyword>